<gene>
    <name type="ORF">PY03426</name>
</gene>
<name>GUF1_PLAYO</name>
<protein>
    <recommendedName>
        <fullName evidence="1">Translation factor GUF1 homolog, mitochondrial</fullName>
        <ecNumber>3.6.5.-</ecNumber>
    </recommendedName>
    <alternativeName>
        <fullName evidence="1">Elongation factor 4 homolog</fullName>
        <shortName evidence="1">EF-4</shortName>
    </alternativeName>
    <alternativeName>
        <fullName evidence="1">GTPase GUF1 homolog</fullName>
    </alternativeName>
    <alternativeName>
        <fullName evidence="1">Ribosomal back-translocase</fullName>
    </alternativeName>
</protein>
<reference key="1">
    <citation type="journal article" date="2002" name="Nature">
        <title>Genome sequence and comparative analysis of the model rodent malaria parasite Plasmodium yoelii yoelii.</title>
        <authorList>
            <person name="Carlton J.M."/>
            <person name="Angiuoli S.V."/>
            <person name="Suh B.B."/>
            <person name="Kooij T.W."/>
            <person name="Pertea M."/>
            <person name="Silva J.C."/>
            <person name="Ermolaeva M.D."/>
            <person name="Allen J.E."/>
            <person name="Selengut J.D."/>
            <person name="Koo H.L."/>
            <person name="Peterson J.D."/>
            <person name="Pop M."/>
            <person name="Kosack D.S."/>
            <person name="Shumway M.F."/>
            <person name="Bidwell S.L."/>
            <person name="Shallom S.J."/>
            <person name="van Aken S.E."/>
            <person name="Riedmuller S.B."/>
            <person name="Feldblyum T.V."/>
            <person name="Cho J.K."/>
            <person name="Quackenbush J."/>
            <person name="Sedegah M."/>
            <person name="Shoaibi A."/>
            <person name="Cummings L.M."/>
            <person name="Florens L."/>
            <person name="Yates J.R. III"/>
            <person name="Raine J.D."/>
            <person name="Sinden R.E."/>
            <person name="Harris M.A."/>
            <person name="Cunningham D.A."/>
            <person name="Preiser P.R."/>
            <person name="Bergman L.W."/>
            <person name="Vaidya A.B."/>
            <person name="van Lin L.H."/>
            <person name="Janse C.J."/>
            <person name="Waters A.P."/>
            <person name="Smith H.O."/>
            <person name="White O.R."/>
            <person name="Salzberg S.L."/>
            <person name="Venter J.C."/>
            <person name="Fraser C.M."/>
            <person name="Hoffman S.L."/>
            <person name="Gardner M.J."/>
            <person name="Carucci D.J."/>
        </authorList>
    </citation>
    <scope>NUCLEOTIDE SEQUENCE [LARGE SCALE GENOMIC DNA]</scope>
    <source>
        <strain>17XNL</strain>
    </source>
</reference>
<sequence>MIYNLSFWRILRISIFIIFLFNFTYVCNIKYNVINKKNVSLVSDTLICREKRQKWWLWKTPSFLKRHSFSRIIKCCDKEQNNIGHFKKSICSLNYIPSFNLLLLLKKWEGLIKKKKNNHNFYEIAHNKITRNINSNWHLSGKGDINDYTKENDSNIYKDEEYNKNQYNDNKNDDTLNKDIVSIANSNLNNEMLHKYNIEQKNVRNFCILAHIDSGKSTLADRFLELTNTIKKKRMQDQFLDMMALERERGITIKLKAVRMNYKNYIFNLIDTPGHFDFYHEVKRSLNVCEGAILLIDGGKGIQAQTLNIFLEIKKHNIKIIPVINKIDLNTCIYDKICDDLVNKFDFKKEEILKISAKYGNNVENVFQRIITDIPYPPIKSNTFFRGVVFDSFYDQYKGVILIIKVLNGFLKKKQKIYFINSKKSYIIQEVGYLTPSMKPTDIIYQGDIAYISSNIRNFDDIEISETIINHDVVQINEQKKKIHINIKKSDFYNTLTNTDQHISNAINSDMDNPVSINFDNKENENLINIKETRCNPEYDLHYSDKKDVVMETNTIKEMSQIENSNIGTDKMHEKNEEFDEINIKDIAADKIDIAYPSVYCNIYSMNDKKCKELEVALNKLKLNDTSFSFKTDICETLGKGFKCGFNGLLHLNIIQERIKREYNVETIITAPSVNYLVKVKEKYIDKKLKAKLIEKNFDINSINIDVGNSESVKKEANETKTQNGMFFMTSNSNDIPQKNYIEHIYEPYVKTNIITPEEYQKHIMNECFKRRGIFIKKEHINDQIIFTFDMPLSEILINFLDEIKSSTKGFGSMSYENYIIYKQSDLYKIHIYINNKCIESLTFIAHKLNYQEKSKTLVSKLKSLINPHQFLIVIQAAIGSNVFVSEKIKPLKKNVTAKCYGGDITRRRKLLEKQNEGKKKMFTIGKVKLPPGIFTKLFNIKDK</sequence>
<evidence type="ECO:0000255" key="1">
    <source>
        <dbReference type="HAMAP-Rule" id="MF_03137"/>
    </source>
</evidence>
<evidence type="ECO:0000305" key="2"/>
<accession>Q7RJ38</accession>
<organism>
    <name type="scientific">Plasmodium yoelii yoelii</name>
    <dbReference type="NCBI Taxonomy" id="73239"/>
    <lineage>
        <taxon>Eukaryota</taxon>
        <taxon>Sar</taxon>
        <taxon>Alveolata</taxon>
        <taxon>Apicomplexa</taxon>
        <taxon>Aconoidasida</taxon>
        <taxon>Haemosporida</taxon>
        <taxon>Plasmodiidae</taxon>
        <taxon>Plasmodium</taxon>
        <taxon>Plasmodium (Vinckeia)</taxon>
    </lineage>
</organism>
<dbReference type="EC" id="3.6.5.-"/>
<dbReference type="EMBL" id="AABL01000982">
    <property type="protein sequence ID" value="EAA22995.1"/>
    <property type="molecule type" value="Genomic_DNA"/>
</dbReference>
<dbReference type="SMR" id="Q7RJ38"/>
<dbReference type="FunCoup" id="Q7RJ38">
    <property type="interactions" value="235"/>
</dbReference>
<dbReference type="STRING" id="73239.Q7RJ38"/>
<dbReference type="PaxDb" id="73239-Q7RJ38"/>
<dbReference type="EnsemblProtists" id="EAA22995">
    <property type="protein sequence ID" value="EAA22995"/>
    <property type="gene ID" value="EAA22995"/>
</dbReference>
<dbReference type="KEGG" id="pyo:PY17X_0816100"/>
<dbReference type="VEuPathDB" id="PlasmoDB:Py17XNL_000801724"/>
<dbReference type="InParanoid" id="Q7RJ38"/>
<dbReference type="Proteomes" id="UP000008553">
    <property type="component" value="Unassembled WGS sequence"/>
</dbReference>
<dbReference type="GO" id="GO:0005743">
    <property type="term" value="C:mitochondrial inner membrane"/>
    <property type="evidence" value="ECO:0007669"/>
    <property type="project" value="UniProtKB-SubCell"/>
</dbReference>
<dbReference type="GO" id="GO:0005759">
    <property type="term" value="C:mitochondrial matrix"/>
    <property type="evidence" value="ECO:0007669"/>
    <property type="project" value="UniProtKB-UniRule"/>
</dbReference>
<dbReference type="GO" id="GO:0005525">
    <property type="term" value="F:GTP binding"/>
    <property type="evidence" value="ECO:0007669"/>
    <property type="project" value="UniProtKB-UniRule"/>
</dbReference>
<dbReference type="GO" id="GO:0003924">
    <property type="term" value="F:GTPase activity"/>
    <property type="evidence" value="ECO:0007669"/>
    <property type="project" value="UniProtKB-UniRule"/>
</dbReference>
<dbReference type="GO" id="GO:0043022">
    <property type="term" value="F:ribosome binding"/>
    <property type="evidence" value="ECO:0007669"/>
    <property type="project" value="UniProtKB-UniRule"/>
</dbReference>
<dbReference type="GO" id="GO:0045727">
    <property type="term" value="P:positive regulation of translation"/>
    <property type="evidence" value="ECO:0007669"/>
    <property type="project" value="UniProtKB-UniRule"/>
</dbReference>
<dbReference type="GO" id="GO:0006412">
    <property type="term" value="P:translation"/>
    <property type="evidence" value="ECO:0007669"/>
    <property type="project" value="UniProtKB-KW"/>
</dbReference>
<dbReference type="CDD" id="cd03699">
    <property type="entry name" value="EF4_II"/>
    <property type="match status" value="1"/>
</dbReference>
<dbReference type="CDD" id="cd03709">
    <property type="entry name" value="lepA_C"/>
    <property type="match status" value="1"/>
</dbReference>
<dbReference type="Gene3D" id="3.30.70.240">
    <property type="match status" value="1"/>
</dbReference>
<dbReference type="Gene3D" id="3.30.70.2570">
    <property type="entry name" value="Elongation factor 4, C-terminal domain"/>
    <property type="match status" value="1"/>
</dbReference>
<dbReference type="Gene3D" id="3.30.70.870">
    <property type="entry name" value="Elongation Factor G (Translational Gtpase), domain 3"/>
    <property type="match status" value="1"/>
</dbReference>
<dbReference type="Gene3D" id="3.40.50.300">
    <property type="entry name" value="P-loop containing nucleotide triphosphate hydrolases"/>
    <property type="match status" value="1"/>
</dbReference>
<dbReference type="Gene3D" id="2.40.30.10">
    <property type="entry name" value="Translation factors"/>
    <property type="match status" value="1"/>
</dbReference>
<dbReference type="HAMAP" id="MF_00071">
    <property type="entry name" value="LepA"/>
    <property type="match status" value="1"/>
</dbReference>
<dbReference type="InterPro" id="IPR006297">
    <property type="entry name" value="EF-4"/>
</dbReference>
<dbReference type="InterPro" id="IPR035647">
    <property type="entry name" value="EFG_III/V"/>
</dbReference>
<dbReference type="InterPro" id="IPR000640">
    <property type="entry name" value="EFG_V-like"/>
</dbReference>
<dbReference type="InterPro" id="IPR038363">
    <property type="entry name" value="LepA_C_sf"/>
</dbReference>
<dbReference type="InterPro" id="IPR013842">
    <property type="entry name" value="LepA_CTD"/>
</dbReference>
<dbReference type="InterPro" id="IPR035654">
    <property type="entry name" value="LepA_IV"/>
</dbReference>
<dbReference type="InterPro" id="IPR027417">
    <property type="entry name" value="P-loop_NTPase"/>
</dbReference>
<dbReference type="InterPro" id="IPR005225">
    <property type="entry name" value="Small_GTP-bd"/>
</dbReference>
<dbReference type="InterPro" id="IPR000795">
    <property type="entry name" value="T_Tr_GTP-bd_dom"/>
</dbReference>
<dbReference type="InterPro" id="IPR009000">
    <property type="entry name" value="Transl_B-barrel_sf"/>
</dbReference>
<dbReference type="NCBIfam" id="TIGR00231">
    <property type="entry name" value="small_GTP"/>
    <property type="match status" value="1"/>
</dbReference>
<dbReference type="PANTHER" id="PTHR43512:SF4">
    <property type="entry name" value="TRANSLATION FACTOR GUF1 HOMOLOG, CHLOROPLASTIC"/>
    <property type="match status" value="1"/>
</dbReference>
<dbReference type="PANTHER" id="PTHR43512">
    <property type="entry name" value="TRANSLATION FACTOR GUF1-RELATED"/>
    <property type="match status" value="1"/>
</dbReference>
<dbReference type="Pfam" id="PF00679">
    <property type="entry name" value="EFG_C"/>
    <property type="match status" value="1"/>
</dbReference>
<dbReference type="Pfam" id="PF00009">
    <property type="entry name" value="GTP_EFTU"/>
    <property type="match status" value="1"/>
</dbReference>
<dbReference type="Pfam" id="PF06421">
    <property type="entry name" value="LepA_C"/>
    <property type="match status" value="1"/>
</dbReference>
<dbReference type="PRINTS" id="PR00315">
    <property type="entry name" value="ELONGATNFCT"/>
</dbReference>
<dbReference type="SUPFAM" id="SSF54980">
    <property type="entry name" value="EF-G C-terminal domain-like"/>
    <property type="match status" value="2"/>
</dbReference>
<dbReference type="SUPFAM" id="SSF52540">
    <property type="entry name" value="P-loop containing nucleoside triphosphate hydrolases"/>
    <property type="match status" value="1"/>
</dbReference>
<dbReference type="SUPFAM" id="SSF50447">
    <property type="entry name" value="Translation proteins"/>
    <property type="match status" value="1"/>
</dbReference>
<dbReference type="PROSITE" id="PS51722">
    <property type="entry name" value="G_TR_2"/>
    <property type="match status" value="1"/>
</dbReference>
<feature type="chain" id="PRO_0000402855" description="Translation factor GUF1 homolog, mitochondrial">
    <location>
        <begin position="1"/>
        <end position="944"/>
    </location>
</feature>
<feature type="domain" description="tr-type G">
    <location>
        <begin position="201"/>
        <end position="379"/>
    </location>
</feature>
<feature type="binding site" evidence="1">
    <location>
        <begin position="210"/>
        <end position="217"/>
    </location>
    <ligand>
        <name>GTP</name>
        <dbReference type="ChEBI" id="CHEBI:37565"/>
    </ligand>
</feature>
<feature type="binding site" evidence="1">
    <location>
        <begin position="271"/>
        <end position="275"/>
    </location>
    <ligand>
        <name>GTP</name>
        <dbReference type="ChEBI" id="CHEBI:37565"/>
    </ligand>
</feature>
<feature type="binding site" evidence="1">
    <location>
        <begin position="325"/>
        <end position="328"/>
    </location>
    <ligand>
        <name>GTP</name>
        <dbReference type="ChEBI" id="CHEBI:37565"/>
    </ligand>
</feature>
<comment type="function">
    <text evidence="1">Promotes mitochondrial protein synthesis. May act as a fidelity factor of the translation reaction, by catalyzing a one-codon backward translocation of tRNAs on improperly translocated ribosomes. Binds to mitochondrial ribosomes in a GTP-dependent manner.</text>
</comment>
<comment type="catalytic activity">
    <reaction evidence="1">
        <text>GTP + H2O = GDP + phosphate + H(+)</text>
        <dbReference type="Rhea" id="RHEA:19669"/>
        <dbReference type="ChEBI" id="CHEBI:15377"/>
        <dbReference type="ChEBI" id="CHEBI:15378"/>
        <dbReference type="ChEBI" id="CHEBI:37565"/>
        <dbReference type="ChEBI" id="CHEBI:43474"/>
        <dbReference type="ChEBI" id="CHEBI:58189"/>
    </reaction>
</comment>
<comment type="subcellular location">
    <subcellularLocation>
        <location evidence="1">Mitochondrion inner membrane</location>
        <topology evidence="1">Peripheral membrane protein</topology>
        <orientation evidence="1">Matrix side</orientation>
    </subcellularLocation>
</comment>
<comment type="miscellaneous">
    <text evidence="1">This protein may be expected to contain an N-terminal transit peptide but none has been predicted.</text>
</comment>
<comment type="similarity">
    <text evidence="2">Belongs to the TRAFAC class translation factor GTPase superfamily. Classic translation factor GTPase family. LepA subfamily.</text>
</comment>
<proteinExistence type="inferred from homology"/>
<keyword id="KW-0342">GTP-binding</keyword>
<keyword id="KW-0378">Hydrolase</keyword>
<keyword id="KW-0472">Membrane</keyword>
<keyword id="KW-0496">Mitochondrion</keyword>
<keyword id="KW-0999">Mitochondrion inner membrane</keyword>
<keyword id="KW-0547">Nucleotide-binding</keyword>
<keyword id="KW-0648">Protein biosynthesis</keyword>
<keyword id="KW-1185">Reference proteome</keyword>